<protein>
    <recommendedName>
        <fullName>Transketolase</fullName>
        <shortName>TK</shortName>
        <ecNumber>2.2.1.1</ecNumber>
    </recommendedName>
</protein>
<gene>
    <name type="primary">tklB</name>
</gene>
<evidence type="ECO:0000250" key="1"/>
<evidence type="ECO:0000305" key="2"/>
<keyword id="KW-0106">Calcium</keyword>
<keyword id="KW-0460">Magnesium</keyword>
<keyword id="KW-0479">Metal-binding</keyword>
<keyword id="KW-0786">Thiamine pyrophosphate</keyword>
<keyword id="KW-0808">Transferase</keyword>
<name>TKT_CERSP</name>
<accession>P29277</accession>
<organism>
    <name type="scientific">Cereibacter sphaeroides</name>
    <name type="common">Rhodobacter sphaeroides</name>
    <dbReference type="NCBI Taxonomy" id="1063"/>
    <lineage>
        <taxon>Bacteria</taxon>
        <taxon>Pseudomonadati</taxon>
        <taxon>Pseudomonadota</taxon>
        <taxon>Alphaproteobacteria</taxon>
        <taxon>Rhodobacterales</taxon>
        <taxon>Paracoccaceae</taxon>
        <taxon>Cereibacter</taxon>
    </lineage>
</organism>
<comment type="function">
    <text evidence="1">Catalyzes the transfer of a two-carbon ketol group from a ketose donor to an aldose acceptor, via a covalent intermediate with the cofactor thiamine pyrophosphate.</text>
</comment>
<comment type="catalytic activity">
    <reaction>
        <text>D-sedoheptulose 7-phosphate + D-glyceraldehyde 3-phosphate = aldehydo-D-ribose 5-phosphate + D-xylulose 5-phosphate</text>
        <dbReference type="Rhea" id="RHEA:10508"/>
        <dbReference type="ChEBI" id="CHEBI:57483"/>
        <dbReference type="ChEBI" id="CHEBI:57737"/>
        <dbReference type="ChEBI" id="CHEBI:58273"/>
        <dbReference type="ChEBI" id="CHEBI:59776"/>
        <dbReference type="EC" id="2.2.1.1"/>
    </reaction>
</comment>
<comment type="cofactor">
    <cofactor evidence="1">
        <name>Mg(2+)</name>
        <dbReference type="ChEBI" id="CHEBI:18420"/>
    </cofactor>
    <cofactor evidence="1">
        <name>Ca(2+)</name>
        <dbReference type="ChEBI" id="CHEBI:29108"/>
    </cofactor>
    <cofactor evidence="1">
        <name>Mn(2+)</name>
        <dbReference type="ChEBI" id="CHEBI:29035"/>
    </cofactor>
    <cofactor evidence="1">
        <name>Co(2+)</name>
        <dbReference type="ChEBI" id="CHEBI:48828"/>
    </cofactor>
    <text evidence="1">Binds 1 Mg(2+) ion per subunit. Can also utilize other divalent metal cations, such as Ca(2+), Mn(2+) and Co(2+).</text>
</comment>
<comment type="cofactor">
    <cofactor evidence="1">
        <name>thiamine diphosphate</name>
        <dbReference type="ChEBI" id="CHEBI:58937"/>
    </cofactor>
    <text evidence="1">Binds 1 thiamine pyrophosphate per subunit.</text>
</comment>
<comment type="pathway">
    <text>Carbohydrate biosynthesis; Calvin cycle.</text>
</comment>
<comment type="pathway">
    <text>Carbohydrate degradation; pentose phosphate pathway.</text>
</comment>
<comment type="subunit">
    <text evidence="1">Homodimer.</text>
</comment>
<comment type="miscellaneous">
    <text>This protein is encoded within the form II ribulose-bisphosphate carboxylase operon.</text>
</comment>
<comment type="similarity">
    <text evidence="2">Belongs to the transketolase family.</text>
</comment>
<dbReference type="EC" id="2.2.1.1"/>
<dbReference type="EMBL" id="M68914">
    <property type="protein sequence ID" value="AAA26155.1"/>
    <property type="molecule type" value="Genomic_DNA"/>
</dbReference>
<dbReference type="PIR" id="B41080">
    <property type="entry name" value="XJRFTK"/>
</dbReference>
<dbReference type="SMR" id="P29277"/>
<dbReference type="UniPathway" id="UPA00115"/>
<dbReference type="UniPathway" id="UPA00116"/>
<dbReference type="GO" id="GO:0005829">
    <property type="term" value="C:cytosol"/>
    <property type="evidence" value="ECO:0007669"/>
    <property type="project" value="TreeGrafter"/>
</dbReference>
<dbReference type="GO" id="GO:0046872">
    <property type="term" value="F:metal ion binding"/>
    <property type="evidence" value="ECO:0007669"/>
    <property type="project" value="UniProtKB-KW"/>
</dbReference>
<dbReference type="GO" id="GO:0004802">
    <property type="term" value="F:transketolase activity"/>
    <property type="evidence" value="ECO:0007669"/>
    <property type="project" value="UniProtKB-EC"/>
</dbReference>
<dbReference type="GO" id="GO:0006098">
    <property type="term" value="P:pentose-phosphate shunt"/>
    <property type="evidence" value="ECO:0007669"/>
    <property type="project" value="UniProtKB-UniPathway"/>
</dbReference>
<dbReference type="GO" id="GO:0019253">
    <property type="term" value="P:reductive pentose-phosphate cycle"/>
    <property type="evidence" value="ECO:0007669"/>
    <property type="project" value="UniProtKB-UniPathway"/>
</dbReference>
<dbReference type="CDD" id="cd07033">
    <property type="entry name" value="TPP_PYR_DXS_TK_like"/>
    <property type="match status" value="1"/>
</dbReference>
<dbReference type="CDD" id="cd02012">
    <property type="entry name" value="TPP_TK"/>
    <property type="match status" value="1"/>
</dbReference>
<dbReference type="FunFam" id="3.40.50.970:FF:000003">
    <property type="entry name" value="Transketolase"/>
    <property type="match status" value="1"/>
</dbReference>
<dbReference type="FunFam" id="3.40.50.970:FF:000004">
    <property type="entry name" value="Transketolase"/>
    <property type="match status" value="1"/>
</dbReference>
<dbReference type="Gene3D" id="3.40.50.920">
    <property type="match status" value="1"/>
</dbReference>
<dbReference type="Gene3D" id="3.40.50.970">
    <property type="match status" value="2"/>
</dbReference>
<dbReference type="InterPro" id="IPR029061">
    <property type="entry name" value="THDP-binding"/>
</dbReference>
<dbReference type="InterPro" id="IPR009014">
    <property type="entry name" value="Transketo_C/PFOR_II"/>
</dbReference>
<dbReference type="InterPro" id="IPR055152">
    <property type="entry name" value="Transketolase-like_C_2"/>
</dbReference>
<dbReference type="InterPro" id="IPR005475">
    <property type="entry name" value="Transketolase-like_Pyr-bd"/>
</dbReference>
<dbReference type="InterPro" id="IPR005478">
    <property type="entry name" value="Transketolase_bac-like"/>
</dbReference>
<dbReference type="InterPro" id="IPR020826">
    <property type="entry name" value="Transketolase_BS"/>
</dbReference>
<dbReference type="InterPro" id="IPR049557">
    <property type="entry name" value="Transketolase_CS"/>
</dbReference>
<dbReference type="InterPro" id="IPR033247">
    <property type="entry name" value="Transketolase_fam"/>
</dbReference>
<dbReference type="InterPro" id="IPR005474">
    <property type="entry name" value="Transketolase_N"/>
</dbReference>
<dbReference type="NCBIfam" id="TIGR00232">
    <property type="entry name" value="tktlase_bact"/>
    <property type="match status" value="1"/>
</dbReference>
<dbReference type="PANTHER" id="PTHR43522">
    <property type="entry name" value="TRANSKETOLASE"/>
    <property type="match status" value="1"/>
</dbReference>
<dbReference type="PANTHER" id="PTHR43522:SF2">
    <property type="entry name" value="TRANSKETOLASE 1-RELATED"/>
    <property type="match status" value="1"/>
</dbReference>
<dbReference type="Pfam" id="PF02779">
    <property type="entry name" value="Transket_pyr"/>
    <property type="match status" value="1"/>
</dbReference>
<dbReference type="Pfam" id="PF22613">
    <property type="entry name" value="Transketolase_C_1"/>
    <property type="match status" value="1"/>
</dbReference>
<dbReference type="Pfam" id="PF00456">
    <property type="entry name" value="Transketolase_N"/>
    <property type="match status" value="1"/>
</dbReference>
<dbReference type="SMART" id="SM00861">
    <property type="entry name" value="Transket_pyr"/>
    <property type="match status" value="1"/>
</dbReference>
<dbReference type="SUPFAM" id="SSF52518">
    <property type="entry name" value="Thiamin diphosphate-binding fold (THDP-binding)"/>
    <property type="match status" value="2"/>
</dbReference>
<dbReference type="SUPFAM" id="SSF52922">
    <property type="entry name" value="TK C-terminal domain-like"/>
    <property type="match status" value="1"/>
</dbReference>
<dbReference type="PROSITE" id="PS00801">
    <property type="entry name" value="TRANSKETOLASE_1"/>
    <property type="match status" value="1"/>
</dbReference>
<dbReference type="PROSITE" id="PS00802">
    <property type="entry name" value="TRANSKETOLASE_2"/>
    <property type="match status" value="1"/>
</dbReference>
<sequence length="657" mass="69338">MKDIGAAQETRMANAIRALAMDAVEKAKSGHPGMPMGMADVATVLFNRFLTVDPSAPKWPDRDRFVLSAGHGSMLLYAIHHLLGYADMDMDQIRSFRQLGARTAGHPEYGHAEGIEVTTGPLGQGIATAVGMALAERMKNARYGDDLVDHFTYVIAGDGCLMEGISHEAIDMGGHLGLGRLIVLWDDNRITIDGDSGISTSTDQKAPFAASGWHVLACDGHAPEEIAAAIEAARRDPRPSMIACRTVIGYGAPNKQGGHDVHGAPLGAAEIAAARERLGWDHPPFEIPADLYEAWGRIAARGADARAAWETRLQASPLRAAFETAEAADTSALPPAIAAYKARLSAEAPKVATRKASEMALGVVNEALPFAVGGSADLTGSNLTRSKGMVSVAPGAFAGSYIHYGIREHGMAAAMNGIALHGGLRPYGGTFMAFADYCRPSIRLSALMGVPVTYVMTHDSIGLGEDGPTHQPVEHLASLRAIPNLAVIRPADAVETAEAWEIAMTATSTPTLLVLSRQNLPTVRTEHRDENLTARGAYLLRDPGERQVTLIATGSELELALAAADLLAAEGIAAAVVSAPCFELFAAQPADYRATVLGRAPRVGCEAALRQGWDLFLGPQDGFVGMTGFGASAPAPALYQHFNITAEAIVKSAKERI</sequence>
<proteinExistence type="inferred from homology"/>
<feature type="chain" id="PRO_0000191869" description="Transketolase">
    <location>
        <begin position="1"/>
        <end position="657"/>
    </location>
</feature>
<feature type="active site" description="Proton donor" evidence="1">
    <location>
        <position position="408"/>
    </location>
</feature>
<feature type="binding site" evidence="1">
    <location>
        <position position="31"/>
    </location>
    <ligand>
        <name>substrate</name>
    </ligand>
</feature>
<feature type="binding site" evidence="1">
    <location>
        <position position="71"/>
    </location>
    <ligand>
        <name>thiamine diphosphate</name>
        <dbReference type="ChEBI" id="CHEBI:58937"/>
    </ligand>
</feature>
<feature type="binding site" evidence="1">
    <location>
        <begin position="120"/>
        <end position="122"/>
    </location>
    <ligand>
        <name>thiamine diphosphate</name>
        <dbReference type="ChEBI" id="CHEBI:58937"/>
    </ligand>
</feature>
<feature type="binding site" evidence="1">
    <location>
        <position position="158"/>
    </location>
    <ligand>
        <name>Mg(2+)</name>
        <dbReference type="ChEBI" id="CHEBI:18420"/>
    </ligand>
</feature>
<feature type="binding site" evidence="1">
    <location>
        <position position="159"/>
    </location>
    <ligand>
        <name>thiamine diphosphate</name>
        <dbReference type="ChEBI" id="CHEBI:58937"/>
    </ligand>
</feature>
<feature type="binding site" evidence="1">
    <location>
        <position position="188"/>
    </location>
    <ligand>
        <name>Mg(2+)</name>
        <dbReference type="ChEBI" id="CHEBI:18420"/>
    </ligand>
</feature>
<feature type="binding site" evidence="1">
    <location>
        <position position="188"/>
    </location>
    <ligand>
        <name>thiamine diphosphate</name>
        <dbReference type="ChEBI" id="CHEBI:58937"/>
    </ligand>
</feature>
<feature type="binding site" evidence="1">
    <location>
        <position position="190"/>
    </location>
    <ligand>
        <name>Mg(2+)</name>
        <dbReference type="ChEBI" id="CHEBI:18420"/>
    </ligand>
</feature>
<feature type="binding site" evidence="1">
    <location>
        <position position="262"/>
    </location>
    <ligand>
        <name>substrate</name>
    </ligand>
</feature>
<feature type="binding site" evidence="1">
    <location>
        <position position="262"/>
    </location>
    <ligand>
        <name>thiamine diphosphate</name>
        <dbReference type="ChEBI" id="CHEBI:58937"/>
    </ligand>
</feature>
<feature type="binding site" evidence="1">
    <location>
        <position position="354"/>
    </location>
    <ligand>
        <name>substrate</name>
    </ligand>
</feature>
<feature type="binding site" evidence="1">
    <location>
        <position position="381"/>
    </location>
    <ligand>
        <name>substrate</name>
    </ligand>
</feature>
<feature type="binding site" evidence="1">
    <location>
        <position position="434"/>
    </location>
    <ligand>
        <name>thiamine diphosphate</name>
        <dbReference type="ChEBI" id="CHEBI:58937"/>
    </ligand>
</feature>
<feature type="binding site" evidence="1">
    <location>
        <position position="458"/>
    </location>
    <ligand>
        <name>substrate</name>
    </ligand>
</feature>
<feature type="binding site" evidence="1">
    <location>
        <position position="466"/>
    </location>
    <ligand>
        <name>substrate</name>
    </ligand>
</feature>
<feature type="binding site" evidence="1">
    <location>
        <position position="517"/>
    </location>
    <ligand>
        <name>substrate</name>
    </ligand>
</feature>
<feature type="site" description="Important for catalytic activity" evidence="1">
    <location>
        <position position="31"/>
    </location>
</feature>
<feature type="site" description="Important for catalytic activity" evidence="1">
    <location>
        <position position="262"/>
    </location>
</feature>
<reference key="1">
    <citation type="journal article" date="1991" name="J. Biol. Chem.">
        <title>Identification, expression, and deduced primary structure of transketolase and other enzymes encoded within the form II CO2 fixation operon of Rhodobacter sphaeroides.</title>
        <authorList>
            <person name="Chen J.-H."/>
            <person name="Gibson J.L."/>
            <person name="McCue L.A."/>
            <person name="Tabita F.R."/>
        </authorList>
    </citation>
    <scope>NUCLEOTIDE SEQUENCE [GENOMIC DNA]</scope>
</reference>